<reference key="1">
    <citation type="journal article" date="2018" name="Sci. Rep.">
        <title>CPP-Ts: a new intracellular calcium channel modulator and a promising tool for drug delivery in cancer cells.</title>
        <authorList>
            <person name="Oliveira-Mendes B.B.R."/>
            <person name="Horta C.C.R."/>
            <person name="do Carmo A.O."/>
            <person name="Biscoto G.L."/>
            <person name="Sales-Medina D.F."/>
            <person name="Leal H.G."/>
            <person name="Brandao-Dias P.F.P."/>
            <person name="Miranda S.E.M."/>
            <person name="Aguiar C.J."/>
            <person name="Cardoso V.N."/>
            <person name="de Barros A.L.B."/>
            <person name="Chavez-Olortegui C."/>
            <person name="Leite M.F."/>
            <person name="Kalapothakis E."/>
        </authorList>
    </citation>
    <scope>NUCLEOTIDE SEQUENCE [MRNA]</scope>
    <scope>SYNTHESIS OF 24-68</scope>
    <scope>FUNCTION</scope>
    <scope>TISSUE SPECIFICITY</scope>
    <scope>SUBCELLULAR LOCATION</scope>
    <scope>MUTAGENESIS OF 24-LEU--LEU-36 AND 63-LYS--PRO-68</scope>
    <source>
        <tissue>Venom gland</tissue>
    </source>
</reference>
<reference evidence="7" key="2">
    <citation type="journal article" date="2021" name="Toxicon">
        <title>Novel components of Tityus serrulatus venom: a transcriptomic approach.</title>
        <authorList>
            <person name="Kalapothakis Y."/>
            <person name="Miranda K."/>
            <person name="Pereira A.H."/>
            <person name="Witt A.S.A."/>
            <person name="Marani C."/>
            <person name="Martins A.P."/>
            <person name="Leal H.G."/>
            <person name="Campos-Junior E."/>
            <person name="Pimenta A.M.C."/>
            <person name="Borges A."/>
            <person name="Chavez-Olortegui C."/>
            <person name="Kalapothakis E."/>
        </authorList>
    </citation>
    <scope>NUCLEOTIDE SEQUENCE [MRNA]</scope>
    <source>
        <tissue>Telson</tissue>
    </source>
</reference>
<accession>P0DM29</accession>
<accession>A0A386IQ04</accession>
<proteinExistence type="evidence at protein level"/>
<evidence type="ECO:0000250" key="1">
    <source>
        <dbReference type="UniProtKB" id="P59868"/>
    </source>
</evidence>
<evidence type="ECO:0000269" key="2">
    <source>
    </source>
</evidence>
<evidence type="ECO:0000303" key="3">
    <source>
    </source>
</evidence>
<evidence type="ECO:0000303" key="4">
    <source>
    </source>
</evidence>
<evidence type="ECO:0000305" key="5"/>
<evidence type="ECO:0000305" key="6">
    <source>
    </source>
</evidence>
<evidence type="ECO:0000312" key="7">
    <source>
        <dbReference type="EMBL" id="QPD99059.1"/>
    </source>
</evidence>
<name>CLCPP_TITSE</name>
<dbReference type="EMBL" id="MH061344">
    <property type="protein sequence ID" value="AYD60134.1"/>
    <property type="molecule type" value="mRNA"/>
</dbReference>
<dbReference type="EMBL" id="MT450723">
    <property type="protein sequence ID" value="QPD99059.1"/>
    <property type="molecule type" value="mRNA"/>
</dbReference>
<dbReference type="SMR" id="P0DM29"/>
<dbReference type="GO" id="GO:0005576">
    <property type="term" value="C:extracellular region"/>
    <property type="evidence" value="ECO:0007669"/>
    <property type="project" value="UniProtKB-SubCell"/>
</dbReference>
<dbReference type="GO" id="GO:0005634">
    <property type="term" value="C:nucleus"/>
    <property type="evidence" value="ECO:0007669"/>
    <property type="project" value="UniProtKB-SubCell"/>
</dbReference>
<dbReference type="GO" id="GO:0005246">
    <property type="term" value="F:calcium channel regulator activity"/>
    <property type="evidence" value="ECO:0007669"/>
    <property type="project" value="UniProtKB-KW"/>
</dbReference>
<dbReference type="GO" id="GO:0090729">
    <property type="term" value="F:toxin activity"/>
    <property type="evidence" value="ECO:0007669"/>
    <property type="project" value="UniProtKB-KW"/>
</dbReference>
<feature type="signal peptide" evidence="6">
    <location>
        <begin position="1"/>
        <end position="23"/>
    </location>
</feature>
<feature type="chain" id="PRO_0000446290" description="Intracellular calcium channel modulator CCP-Ts" evidence="6">
    <location>
        <begin position="24"/>
        <end position="68"/>
    </location>
</feature>
<feature type="disulfide bond" evidence="1">
    <location>
        <begin position="33"/>
        <end position="47"/>
    </location>
</feature>
<feature type="disulfide bond" evidence="1">
    <location>
        <begin position="40"/>
        <end position="53"/>
    </location>
</feature>
<feature type="disulfide bond" evidence="1">
    <location>
        <begin position="46"/>
        <end position="62"/>
    </location>
</feature>
<feature type="mutagenesis site" description="Peptide(14-39); no change in nuclear localization but complete loss of pharmacological activity (calcium transient and contraction frequency), shows selective internalization properties in specific cell lines." evidence="2">
    <location>
        <begin position="24"/>
        <end position="36"/>
    </location>
</feature>
<feature type="mutagenesis site" description="Peptide(14-39); no change in nuclear localization but complete loss of pharmacological activity (calcium transient and contraction frequency), shows selective internalization properties in specific cell lines." evidence="2">
    <location>
        <begin position="63"/>
        <end position="68"/>
    </location>
</feature>
<sequence>MNPKLLIVIGLLLATGVCSFAKALDEESLRKECNHLNEPCDSDGDCCTSSEQCISTGSKYFCKGKQGP</sequence>
<protein>
    <recommendedName>
        <fullName evidence="3">Intracellular calcium channel modulator CCP-Ts</fullName>
    </recommendedName>
    <alternativeName>
        <fullName evidence="4">CaTx</fullName>
    </alternativeName>
    <alternativeName>
        <fullName evidence="4">Calcium channel toxin Ts32</fullName>
    </alternativeName>
    <alternativeName>
        <fullName evidence="3">Cell penetrating peptides-Ts</fullName>
        <shortName evidence="3">CPP</shortName>
        <shortName evidence="3">CPP-Ts</shortName>
    </alternativeName>
    <alternativeName>
        <fullName evidence="5">Tityustoxin-32</fullName>
    </alternativeName>
</protein>
<organism>
    <name type="scientific">Tityus serrulatus</name>
    <name type="common">Brazilian scorpion</name>
    <dbReference type="NCBI Taxonomy" id="6887"/>
    <lineage>
        <taxon>Eukaryota</taxon>
        <taxon>Metazoa</taxon>
        <taxon>Ecdysozoa</taxon>
        <taxon>Arthropoda</taxon>
        <taxon>Chelicerata</taxon>
        <taxon>Arachnida</taxon>
        <taxon>Scorpiones</taxon>
        <taxon>Buthida</taxon>
        <taxon>Buthoidea</taxon>
        <taxon>Buthidae</taxon>
        <taxon>Tityus</taxon>
    </lineage>
</organism>
<keyword id="KW-0108">Calcium channel impairing toxin</keyword>
<keyword id="KW-0123">Cardiotoxin</keyword>
<keyword id="KW-1015">Disulfide bond</keyword>
<keyword id="KW-0872">Ion channel impairing toxin</keyword>
<keyword id="KW-0960">Knottin</keyword>
<keyword id="KW-0539">Nucleus</keyword>
<keyword id="KW-0964">Secreted</keyword>
<keyword id="KW-0732">Signal</keyword>
<keyword id="KW-0800">Toxin</keyword>
<comment type="function">
    <text evidence="2">Cell penetrating peptide (CPP) that increases intracellular calcium release through the activation of nuclear inositol 1,4,5-trisphosphate receptors (ITPR) of cardiomyocytes, thereby causing an increase in the contraction frequency of these cells (PubMed:30282983). In vivo, this toxin is not lethal to mice, hovewer anti-CPP serum reduces venom lethality, suggesting that this toxin is lethal when it acts in synergy with other venom components (PubMed:30282983).</text>
</comment>
<comment type="subcellular location">
    <subcellularLocation>
        <location evidence="6">Secreted</location>
    </subcellularLocation>
    <subcellularLocation>
        <location evidence="2">Nucleus</location>
    </subcellularLocation>
    <text evidence="2">Secreted in the venom and directed to the intranuclear region of cardiomyocytes (PubMed:30282983).</text>
</comment>
<comment type="tissue specificity">
    <text evidence="2">Expressed by the venom gland. In intravenously injected mice, the labeled toxin has preference for heart, liver and lungs.</text>
</comment>
<comment type="domain">
    <text evidence="1">The presence of a 'disulfide through disulfide knot' structurally defines this protein as a knottin.</text>
</comment>
<comment type="biotechnology">
    <text evidence="2">The peptide(14-39) may have biotechnological applications as a drug delivery system targeting cancer cells, since it lacks pharmacological activity of the wild-type toxin and has selective internalization properties in specific cell lines. It is directed to the nucleus of six neoplastic cell lines (SK-MEL-188, HEP G2, Caco-2, MDA-MB-231, A549 and DU 145), as well as in rat cardiomyocytes, and rat heptocytes. However, it is unable to cross the cell membrane of six normal immortalized cell lines (HUV-EC-C, HFF-1, MCR-5, HEK-293, BHK-21 and MDCK).</text>
</comment>
<comment type="similarity">
    <text evidence="5">Belongs to the scorpion calcin-like family.</text>
</comment>